<dbReference type="EMBL" id="AAFI02000036">
    <property type="protein sequence ID" value="EAL67203.1"/>
    <property type="molecule type" value="Genomic_DNA"/>
</dbReference>
<dbReference type="SMR" id="Q54VC7"/>
<dbReference type="FunCoup" id="Q54VC7">
    <property type="interactions" value="78"/>
</dbReference>
<dbReference type="STRING" id="44689.Q54VC7"/>
<dbReference type="PaxDb" id="44689-DDB0237591"/>
<dbReference type="EnsemblProtists" id="EAL67203">
    <property type="protein sequence ID" value="EAL67203"/>
    <property type="gene ID" value="DDB_G0280449"/>
</dbReference>
<dbReference type="KEGG" id="ddi:DDB_G0280449"/>
<dbReference type="dictyBase" id="DDB_G0280449">
    <property type="gene designation" value="pitE"/>
</dbReference>
<dbReference type="VEuPathDB" id="AmoebaDB:DDB_G0280449"/>
<dbReference type="eggNOG" id="KOG3668">
    <property type="taxonomic scope" value="Eukaryota"/>
</dbReference>
<dbReference type="HOGENOM" id="CLU_046509_3_0_1"/>
<dbReference type="InParanoid" id="Q54VC7"/>
<dbReference type="OMA" id="VENRPCE"/>
<dbReference type="PhylomeDB" id="Q54VC7"/>
<dbReference type="PRO" id="PR:Q54VC7"/>
<dbReference type="Proteomes" id="UP000002195">
    <property type="component" value="Chromosome 3"/>
</dbReference>
<dbReference type="GO" id="GO:0005737">
    <property type="term" value="C:cytoplasm"/>
    <property type="evidence" value="ECO:0000318"/>
    <property type="project" value="GO_Central"/>
</dbReference>
<dbReference type="GO" id="GO:0031210">
    <property type="term" value="F:phosphatidylcholine binding"/>
    <property type="evidence" value="ECO:0000318"/>
    <property type="project" value="GO_Central"/>
</dbReference>
<dbReference type="GO" id="GO:0008525">
    <property type="term" value="F:phosphatidylcholine transporter activity"/>
    <property type="evidence" value="ECO:0000318"/>
    <property type="project" value="GO_Central"/>
</dbReference>
<dbReference type="GO" id="GO:0035091">
    <property type="term" value="F:phosphatidylinositol binding"/>
    <property type="evidence" value="ECO:0000318"/>
    <property type="project" value="GO_Central"/>
</dbReference>
<dbReference type="GO" id="GO:0008526">
    <property type="term" value="F:phosphatidylinositol transfer activity"/>
    <property type="evidence" value="ECO:0000318"/>
    <property type="project" value="GO_Central"/>
</dbReference>
<dbReference type="CDD" id="cd07815">
    <property type="entry name" value="SRPBCC_PITP"/>
    <property type="match status" value="1"/>
</dbReference>
<dbReference type="FunFam" id="3.30.530.20:FF:000028">
    <property type="entry name" value="Phosphatidylinositol transfer protein 5"/>
    <property type="match status" value="1"/>
</dbReference>
<dbReference type="Gene3D" id="3.30.530.20">
    <property type="match status" value="1"/>
</dbReference>
<dbReference type="InterPro" id="IPR001666">
    <property type="entry name" value="PI_transfer"/>
</dbReference>
<dbReference type="InterPro" id="IPR055261">
    <property type="entry name" value="PI_transfer_N"/>
</dbReference>
<dbReference type="InterPro" id="IPR023393">
    <property type="entry name" value="START-like_dom_sf"/>
</dbReference>
<dbReference type="PANTHER" id="PTHR10658:SF54">
    <property type="entry name" value="CYTOPLASMIC PHOSPHATIDYLINOSITOL TRANSFER PROTEIN 1"/>
    <property type="match status" value="1"/>
</dbReference>
<dbReference type="PANTHER" id="PTHR10658">
    <property type="entry name" value="PHOSPHATIDYLINOSITOL TRANSFER PROTEIN"/>
    <property type="match status" value="1"/>
</dbReference>
<dbReference type="Pfam" id="PF02121">
    <property type="entry name" value="IP_trans"/>
    <property type="match status" value="1"/>
</dbReference>
<dbReference type="PRINTS" id="PR00391">
    <property type="entry name" value="PITRANSFER"/>
</dbReference>
<dbReference type="SUPFAM" id="SSF55961">
    <property type="entry name" value="Bet v1-like"/>
    <property type="match status" value="1"/>
</dbReference>
<gene>
    <name type="primary">pitE</name>
    <name type="ORF">DDB_G0280449</name>
</gene>
<feature type="chain" id="PRO_0000328408" description="Phosphatidylinositol transfer protein 5">
    <location>
        <begin position="1"/>
        <end position="287"/>
    </location>
</feature>
<feature type="region of interest" description="Disordered" evidence="2">
    <location>
        <begin position="252"/>
        <end position="287"/>
    </location>
</feature>
<feature type="compositionally biased region" description="Low complexity" evidence="2">
    <location>
        <begin position="254"/>
        <end position="270"/>
    </location>
</feature>
<feature type="compositionally biased region" description="Polar residues" evidence="2">
    <location>
        <begin position="271"/>
        <end position="287"/>
    </location>
</feature>
<comment type="function">
    <text evidence="1">Phosphatidylinositol transfer proteins mediate the monomeric transport of lipids by shielding a lipid from the aqueous environment and binding the lipid in a hydrophobic cavity (By similarity).</text>
</comment>
<comment type="similarity">
    <text evidence="3">Belongs to the PtdIns transfer protein family. PI transfer class IIA subfamily.</text>
</comment>
<proteinExistence type="inferred from homology"/>
<protein>
    <recommendedName>
        <fullName>Phosphatidylinositol transfer protein 5</fullName>
        <shortName>PtdIns transfer protein 5</shortName>
    </recommendedName>
    <alternativeName>
        <fullName>DdPITP3</fullName>
    </alternativeName>
</protein>
<keyword id="KW-0445">Lipid transport</keyword>
<keyword id="KW-0446">Lipid-binding</keyword>
<keyword id="KW-1185">Reference proteome</keyword>
<keyword id="KW-0813">Transport</keyword>
<sequence length="287" mass="33408">MVLIKEFRIPLPLTVEEYKVAQLFMVATISKKNTSLGEGIEVIENKPYADGATTGFFTRKIFHLGGRLPTWLRSFAPTSLQIEEKAWNAYPYCKTSYACPLLGDRFSVSIETRYEPDSGTQDNCLNLNSEELSIREVEHIDIVNDPIDEAHYKPEEDPKIFQSVKTGRGKLQNDWMKSTKPIMCCYKVCKVEFRCWGVQNKVENFIQRVALRDTFFMGHRQIFCWIDQWFDMDMESLREFEKKTNEEMKAQFHNNNNNNSNNSNNNNNNNTQPQRSSFFSRSTDGNK</sequence>
<organism>
    <name type="scientific">Dictyostelium discoideum</name>
    <name type="common">Social amoeba</name>
    <dbReference type="NCBI Taxonomy" id="44689"/>
    <lineage>
        <taxon>Eukaryota</taxon>
        <taxon>Amoebozoa</taxon>
        <taxon>Evosea</taxon>
        <taxon>Eumycetozoa</taxon>
        <taxon>Dictyostelia</taxon>
        <taxon>Dictyosteliales</taxon>
        <taxon>Dictyosteliaceae</taxon>
        <taxon>Dictyostelium</taxon>
    </lineage>
</organism>
<evidence type="ECO:0000250" key="1">
    <source>
        <dbReference type="UniProtKB" id="Q9UKF7"/>
    </source>
</evidence>
<evidence type="ECO:0000256" key="2">
    <source>
        <dbReference type="SAM" id="MobiDB-lite"/>
    </source>
</evidence>
<evidence type="ECO:0000305" key="3"/>
<accession>Q54VC7</accession>
<name>PITE_DICDI</name>
<reference key="1">
    <citation type="journal article" date="2005" name="Nature">
        <title>The genome of the social amoeba Dictyostelium discoideum.</title>
        <authorList>
            <person name="Eichinger L."/>
            <person name="Pachebat J.A."/>
            <person name="Gloeckner G."/>
            <person name="Rajandream M.A."/>
            <person name="Sucgang R."/>
            <person name="Berriman M."/>
            <person name="Song J."/>
            <person name="Olsen R."/>
            <person name="Szafranski K."/>
            <person name="Xu Q."/>
            <person name="Tunggal B."/>
            <person name="Kummerfeld S."/>
            <person name="Madera M."/>
            <person name="Konfortov B.A."/>
            <person name="Rivero F."/>
            <person name="Bankier A.T."/>
            <person name="Lehmann R."/>
            <person name="Hamlin N."/>
            <person name="Davies R."/>
            <person name="Gaudet P."/>
            <person name="Fey P."/>
            <person name="Pilcher K."/>
            <person name="Chen G."/>
            <person name="Saunders D."/>
            <person name="Sodergren E.J."/>
            <person name="Davis P."/>
            <person name="Kerhornou A."/>
            <person name="Nie X."/>
            <person name="Hall N."/>
            <person name="Anjard C."/>
            <person name="Hemphill L."/>
            <person name="Bason N."/>
            <person name="Farbrother P."/>
            <person name="Desany B."/>
            <person name="Just E."/>
            <person name="Morio T."/>
            <person name="Rost R."/>
            <person name="Churcher C.M."/>
            <person name="Cooper J."/>
            <person name="Haydock S."/>
            <person name="van Driessche N."/>
            <person name="Cronin A."/>
            <person name="Goodhead I."/>
            <person name="Muzny D.M."/>
            <person name="Mourier T."/>
            <person name="Pain A."/>
            <person name="Lu M."/>
            <person name="Harper D."/>
            <person name="Lindsay R."/>
            <person name="Hauser H."/>
            <person name="James K.D."/>
            <person name="Quiles M."/>
            <person name="Madan Babu M."/>
            <person name="Saito T."/>
            <person name="Buchrieser C."/>
            <person name="Wardroper A."/>
            <person name="Felder M."/>
            <person name="Thangavelu M."/>
            <person name="Johnson D."/>
            <person name="Knights A."/>
            <person name="Loulseged H."/>
            <person name="Mungall K.L."/>
            <person name="Oliver K."/>
            <person name="Price C."/>
            <person name="Quail M.A."/>
            <person name="Urushihara H."/>
            <person name="Hernandez J."/>
            <person name="Rabbinowitsch E."/>
            <person name="Steffen D."/>
            <person name="Sanders M."/>
            <person name="Ma J."/>
            <person name="Kohara Y."/>
            <person name="Sharp S."/>
            <person name="Simmonds M.N."/>
            <person name="Spiegler S."/>
            <person name="Tivey A."/>
            <person name="Sugano S."/>
            <person name="White B."/>
            <person name="Walker D."/>
            <person name="Woodward J.R."/>
            <person name="Winckler T."/>
            <person name="Tanaka Y."/>
            <person name="Shaulsky G."/>
            <person name="Schleicher M."/>
            <person name="Weinstock G.M."/>
            <person name="Rosenthal A."/>
            <person name="Cox E.C."/>
            <person name="Chisholm R.L."/>
            <person name="Gibbs R.A."/>
            <person name="Loomis W.F."/>
            <person name="Platzer M."/>
            <person name="Kay R.R."/>
            <person name="Williams J.G."/>
            <person name="Dear P.H."/>
            <person name="Noegel A.A."/>
            <person name="Barrell B.G."/>
            <person name="Kuspa A."/>
        </authorList>
    </citation>
    <scope>NUCLEOTIDE SEQUENCE [LARGE SCALE GENOMIC DNA]</scope>
    <source>
        <strain>AX4</strain>
    </source>
</reference>